<protein>
    <recommendedName>
        <fullName>Vacuolar protein sorting-associated protein 27</fullName>
    </recommendedName>
</protein>
<feature type="chain" id="PRO_0000292509" description="Vacuolar protein sorting-associated protein 27">
    <location>
        <begin position="1"/>
        <end position="703"/>
    </location>
</feature>
<feature type="domain" description="VHS" evidence="4">
    <location>
        <begin position="16"/>
        <end position="147"/>
    </location>
</feature>
<feature type="domain" description="UIM 1" evidence="3">
    <location>
        <begin position="261"/>
        <end position="280"/>
    </location>
</feature>
<feature type="domain" description="UIM 2" evidence="3">
    <location>
        <begin position="307"/>
        <end position="326"/>
    </location>
</feature>
<feature type="zinc finger region" description="FYVE-type; degenerate" evidence="2">
    <location>
        <begin position="165"/>
        <end position="225"/>
    </location>
</feature>
<feature type="region of interest" description="Disordered" evidence="5">
    <location>
        <begin position="276"/>
        <end position="306"/>
    </location>
</feature>
<feature type="region of interest" description="Disordered" evidence="5">
    <location>
        <begin position="323"/>
        <end position="357"/>
    </location>
</feature>
<feature type="region of interest" description="Disordered" evidence="5">
    <location>
        <begin position="568"/>
        <end position="703"/>
    </location>
</feature>
<feature type="compositionally biased region" description="Polar residues" evidence="5">
    <location>
        <begin position="279"/>
        <end position="290"/>
    </location>
</feature>
<feature type="compositionally biased region" description="Low complexity" evidence="5">
    <location>
        <begin position="291"/>
        <end position="303"/>
    </location>
</feature>
<feature type="compositionally biased region" description="Polar residues" evidence="5">
    <location>
        <begin position="335"/>
        <end position="350"/>
    </location>
</feature>
<feature type="compositionally biased region" description="Basic and acidic residues" evidence="5">
    <location>
        <begin position="580"/>
        <end position="594"/>
    </location>
</feature>
<feature type="compositionally biased region" description="Pro residues" evidence="5">
    <location>
        <begin position="648"/>
        <end position="658"/>
    </location>
</feature>
<dbReference type="EMBL" id="AM270233">
    <property type="protein sequence ID" value="CAK40672.1"/>
    <property type="molecule type" value="Genomic_DNA"/>
</dbReference>
<dbReference type="RefSeq" id="XP_001394435.1">
    <property type="nucleotide sequence ID" value="XM_001394398.1"/>
</dbReference>
<dbReference type="SMR" id="A2QWA2"/>
<dbReference type="EnsemblFungi" id="CAK40672">
    <property type="protein sequence ID" value="CAK40672"/>
    <property type="gene ID" value="An11g04400"/>
</dbReference>
<dbReference type="GeneID" id="4984671"/>
<dbReference type="KEGG" id="ang:An11g04400"/>
<dbReference type="VEuPathDB" id="FungiDB:An11g04400"/>
<dbReference type="HOGENOM" id="CLU_011862_1_0_1"/>
<dbReference type="Proteomes" id="UP000006706">
    <property type="component" value="Chromosome 7R"/>
</dbReference>
<dbReference type="GO" id="GO:0010008">
    <property type="term" value="C:endosome membrane"/>
    <property type="evidence" value="ECO:0007669"/>
    <property type="project" value="UniProtKB-SubCell"/>
</dbReference>
<dbReference type="GO" id="GO:0033565">
    <property type="term" value="C:ESCRT-0 complex"/>
    <property type="evidence" value="ECO:0007669"/>
    <property type="project" value="TreeGrafter"/>
</dbReference>
<dbReference type="GO" id="GO:0032266">
    <property type="term" value="F:phosphatidylinositol-3-phosphate binding"/>
    <property type="evidence" value="ECO:0007669"/>
    <property type="project" value="TreeGrafter"/>
</dbReference>
<dbReference type="GO" id="GO:0043130">
    <property type="term" value="F:ubiquitin binding"/>
    <property type="evidence" value="ECO:0007669"/>
    <property type="project" value="InterPro"/>
</dbReference>
<dbReference type="GO" id="GO:0008270">
    <property type="term" value="F:zinc ion binding"/>
    <property type="evidence" value="ECO:0007669"/>
    <property type="project" value="UniProtKB-KW"/>
</dbReference>
<dbReference type="GO" id="GO:0006623">
    <property type="term" value="P:protein targeting to vacuole"/>
    <property type="evidence" value="ECO:0007669"/>
    <property type="project" value="TreeGrafter"/>
</dbReference>
<dbReference type="GO" id="GO:0043328">
    <property type="term" value="P:protein transport to vacuole involved in ubiquitin-dependent protein catabolic process via the multivesicular body sorting pathway"/>
    <property type="evidence" value="ECO:0007669"/>
    <property type="project" value="TreeGrafter"/>
</dbReference>
<dbReference type="CDD" id="cd15735">
    <property type="entry name" value="FYVE_spVPS27p_like"/>
    <property type="match status" value="1"/>
</dbReference>
<dbReference type="CDD" id="cd21385">
    <property type="entry name" value="GAT_Vps27"/>
    <property type="match status" value="1"/>
</dbReference>
<dbReference type="CDD" id="cd16979">
    <property type="entry name" value="VHS_Vps27"/>
    <property type="match status" value="1"/>
</dbReference>
<dbReference type="FunFam" id="1.20.5.1940:FF:000001">
    <property type="entry name" value="Vacuolar protein sorting-associated protein 27"/>
    <property type="match status" value="1"/>
</dbReference>
<dbReference type="FunFam" id="1.25.40.90:FF:000031">
    <property type="entry name" value="Vacuolar protein sorting-associated protein 27"/>
    <property type="match status" value="1"/>
</dbReference>
<dbReference type="FunFam" id="3.30.40.10:FF:000161">
    <property type="entry name" value="Vacuolar protein sorting-associated protein 27"/>
    <property type="match status" value="1"/>
</dbReference>
<dbReference type="Gene3D" id="1.20.5.1940">
    <property type="match status" value="1"/>
</dbReference>
<dbReference type="Gene3D" id="1.25.40.90">
    <property type="match status" value="1"/>
</dbReference>
<dbReference type="Gene3D" id="6.10.140.100">
    <property type="match status" value="1"/>
</dbReference>
<dbReference type="Gene3D" id="3.30.40.10">
    <property type="entry name" value="Zinc/RING finger domain, C3HC4 (zinc finger)"/>
    <property type="match status" value="1"/>
</dbReference>
<dbReference type="InterPro" id="IPR008942">
    <property type="entry name" value="ENTH_VHS"/>
</dbReference>
<dbReference type="InterPro" id="IPR017073">
    <property type="entry name" value="HGS/VPS27"/>
</dbReference>
<dbReference type="InterPro" id="IPR003903">
    <property type="entry name" value="UIM_dom"/>
</dbReference>
<dbReference type="InterPro" id="IPR002014">
    <property type="entry name" value="VHS_dom"/>
</dbReference>
<dbReference type="InterPro" id="IPR049425">
    <property type="entry name" value="Vps27_GAT-like"/>
</dbReference>
<dbReference type="InterPro" id="IPR000306">
    <property type="entry name" value="Znf_FYVE"/>
</dbReference>
<dbReference type="InterPro" id="IPR017455">
    <property type="entry name" value="Znf_FYVE-rel"/>
</dbReference>
<dbReference type="InterPro" id="IPR011011">
    <property type="entry name" value="Znf_FYVE_PHD"/>
</dbReference>
<dbReference type="InterPro" id="IPR013083">
    <property type="entry name" value="Znf_RING/FYVE/PHD"/>
</dbReference>
<dbReference type="PANTHER" id="PTHR47794">
    <property type="entry name" value="VACUOLAR PROTEIN SORTING-ASSOCIATED PROTEIN 27"/>
    <property type="match status" value="1"/>
</dbReference>
<dbReference type="PANTHER" id="PTHR47794:SF1">
    <property type="entry name" value="VACUOLAR PROTEIN SORTING-ASSOCIATED PROTEIN 27"/>
    <property type="match status" value="1"/>
</dbReference>
<dbReference type="Pfam" id="PF01363">
    <property type="entry name" value="FYVE"/>
    <property type="match status" value="1"/>
</dbReference>
<dbReference type="Pfam" id="PF02809">
    <property type="entry name" value="UIM"/>
    <property type="match status" value="2"/>
</dbReference>
<dbReference type="Pfam" id="PF00790">
    <property type="entry name" value="VHS"/>
    <property type="match status" value="1"/>
</dbReference>
<dbReference type="Pfam" id="PF21356">
    <property type="entry name" value="Vps27_GAT-like"/>
    <property type="match status" value="1"/>
</dbReference>
<dbReference type="PIRSF" id="PIRSF036956">
    <property type="entry name" value="Hrs_Vps27"/>
    <property type="match status" value="1"/>
</dbReference>
<dbReference type="SMART" id="SM00064">
    <property type="entry name" value="FYVE"/>
    <property type="match status" value="1"/>
</dbReference>
<dbReference type="SMART" id="SM00726">
    <property type="entry name" value="UIM"/>
    <property type="match status" value="2"/>
</dbReference>
<dbReference type="SMART" id="SM00288">
    <property type="entry name" value="VHS"/>
    <property type="match status" value="1"/>
</dbReference>
<dbReference type="SUPFAM" id="SSF48464">
    <property type="entry name" value="ENTH/VHS domain"/>
    <property type="match status" value="1"/>
</dbReference>
<dbReference type="SUPFAM" id="SSF57903">
    <property type="entry name" value="FYVE/PHD zinc finger"/>
    <property type="match status" value="1"/>
</dbReference>
<dbReference type="PROSITE" id="PS50330">
    <property type="entry name" value="UIM"/>
    <property type="match status" value="2"/>
</dbReference>
<dbReference type="PROSITE" id="PS50179">
    <property type="entry name" value="VHS"/>
    <property type="match status" value="1"/>
</dbReference>
<dbReference type="PROSITE" id="PS50178">
    <property type="entry name" value="ZF_FYVE"/>
    <property type="match status" value="1"/>
</dbReference>
<organism>
    <name type="scientific">Aspergillus niger (strain ATCC MYA-4892 / CBS 513.88 / FGSC A1513)</name>
    <dbReference type="NCBI Taxonomy" id="425011"/>
    <lineage>
        <taxon>Eukaryota</taxon>
        <taxon>Fungi</taxon>
        <taxon>Dikarya</taxon>
        <taxon>Ascomycota</taxon>
        <taxon>Pezizomycotina</taxon>
        <taxon>Eurotiomycetes</taxon>
        <taxon>Eurotiomycetidae</taxon>
        <taxon>Eurotiales</taxon>
        <taxon>Aspergillaceae</taxon>
        <taxon>Aspergillus</taxon>
        <taxon>Aspergillus subgen. Circumdati</taxon>
    </lineage>
</organism>
<gene>
    <name type="primary">vps27</name>
    <name type="ORF">An11g04400</name>
</gene>
<keyword id="KW-0967">Endosome</keyword>
<keyword id="KW-0472">Membrane</keyword>
<keyword id="KW-0479">Metal-binding</keyword>
<keyword id="KW-1185">Reference proteome</keyword>
<keyword id="KW-0677">Repeat</keyword>
<keyword id="KW-0862">Zinc</keyword>
<keyword id="KW-0863">Zinc-finger</keyword>
<accession>A2QWA2</accession>
<proteinExistence type="inferred from homology"/>
<sequence length="703" mass="76479">MAGWFSSTSTIEDQVEKATASSLEDIALNLEISDLIRSKGVQPKDAMRCLKRRLENKNPNIQLATLKLTDTCVKNGGTHFLAEIASREFMDNLVSLLKTEGAPLNSDVKAKMLELIQDWAMAAQGRMDLSYVGETYRRLQDEGFRFPPKTQISGSMLESSAPPEWIDSDVCMRCRTPFSFMNRKHHCRNCGSVFDAQCSSKSLPLPHLGILQPVRVDDGCYAKLTSKALAPSGLSDRASFKNNSITKSSVMEPRGGRAEGGFDDDLRRALQMSLEEAQNKGSSGYVPQSTAVQQPPRAPAQPAIEEEEDADLKAAIEASLRDMEEHKQKHAAALKNTSSADIPSRQTPSATPLPKNSYELSPVEVENIHLFAALVDRLQHQPPGTILREPQIQELYESIGALRPKLARSYGETMSKHDTLLDLHAKLSTVVRYYDRMLEERLSSAYAQHSLGYSPVPGGSPYPNIYPPMPAHAPDGKTGTESFYYGNAIAESHQAPTTPYPQPQPERELHERVGTRSGTMSPGVYAHPSQPISPTVPWNGSAHAVASPQPSSASMAYPSNPSAYAGPAAPTQFYTSPPHVEPDSKPAQHARPMEPDMPYQGSPVMQRETPYQPTAPSAPDLPADQGPASGYGLQRQPTDPSAALYYAPQPPQGTPYPAYPQGAPVHPGQAVGDVSPVGVTPAHAPYQQPTPSRPPVEESLIEL</sequence>
<evidence type="ECO:0000250" key="1"/>
<evidence type="ECO:0000255" key="2">
    <source>
        <dbReference type="PROSITE-ProRule" id="PRU00091"/>
    </source>
</evidence>
<evidence type="ECO:0000255" key="3">
    <source>
        <dbReference type="PROSITE-ProRule" id="PRU00213"/>
    </source>
</evidence>
<evidence type="ECO:0000255" key="4">
    <source>
        <dbReference type="PROSITE-ProRule" id="PRU00218"/>
    </source>
</evidence>
<evidence type="ECO:0000256" key="5">
    <source>
        <dbReference type="SAM" id="MobiDB-lite"/>
    </source>
</evidence>
<evidence type="ECO:0000305" key="6"/>
<comment type="function">
    <text evidence="1">Component of the ESCRT-0 complex which is the sorting receptor for ubiquitinated cargo proteins at the multivesicular body (MVB) and recruits ESCRT-I to the MVB outer membrane.</text>
</comment>
<comment type="subunit">
    <text>Component of the ESCRT-0 complex composed of HSE1 and VPS27.</text>
</comment>
<comment type="subcellular location">
    <subcellularLocation>
        <location evidence="1">Endosome membrane</location>
        <topology evidence="1">Peripheral membrane protein</topology>
        <orientation evidence="1">Cytoplasmic side</orientation>
    </subcellularLocation>
</comment>
<comment type="domain">
    <text>The FYVE domain is involved in the binding to phosphatidylinositol 3-phosphate (PtdIns(3)P) which is required for the association to endosomal membranes.</text>
</comment>
<comment type="domain">
    <text evidence="1">Both IUM domains are necessary for efficient binding to ubiquitin.</text>
</comment>
<comment type="similarity">
    <text evidence="6">Belongs to the VPS27 family.</text>
</comment>
<name>VPS27_ASPNC</name>
<reference key="1">
    <citation type="journal article" date="2007" name="Nat. Biotechnol.">
        <title>Genome sequencing and analysis of the versatile cell factory Aspergillus niger CBS 513.88.</title>
        <authorList>
            <person name="Pel H.J."/>
            <person name="de Winde J.H."/>
            <person name="Archer D.B."/>
            <person name="Dyer P.S."/>
            <person name="Hofmann G."/>
            <person name="Schaap P.J."/>
            <person name="Turner G."/>
            <person name="de Vries R.P."/>
            <person name="Albang R."/>
            <person name="Albermann K."/>
            <person name="Andersen M.R."/>
            <person name="Bendtsen J.D."/>
            <person name="Benen J.A.E."/>
            <person name="van den Berg M."/>
            <person name="Breestraat S."/>
            <person name="Caddick M.X."/>
            <person name="Contreras R."/>
            <person name="Cornell M."/>
            <person name="Coutinho P.M."/>
            <person name="Danchin E.G.J."/>
            <person name="Debets A.J.M."/>
            <person name="Dekker P."/>
            <person name="van Dijck P.W.M."/>
            <person name="van Dijk A."/>
            <person name="Dijkhuizen L."/>
            <person name="Driessen A.J.M."/>
            <person name="d'Enfert C."/>
            <person name="Geysens S."/>
            <person name="Goosen C."/>
            <person name="Groot G.S.P."/>
            <person name="de Groot P.W.J."/>
            <person name="Guillemette T."/>
            <person name="Henrissat B."/>
            <person name="Herweijer M."/>
            <person name="van den Hombergh J.P.T.W."/>
            <person name="van den Hondel C.A.M.J.J."/>
            <person name="van der Heijden R.T.J.M."/>
            <person name="van der Kaaij R.M."/>
            <person name="Klis F.M."/>
            <person name="Kools H.J."/>
            <person name="Kubicek C.P."/>
            <person name="van Kuyk P.A."/>
            <person name="Lauber J."/>
            <person name="Lu X."/>
            <person name="van der Maarel M.J.E.C."/>
            <person name="Meulenberg R."/>
            <person name="Menke H."/>
            <person name="Mortimer M.A."/>
            <person name="Nielsen J."/>
            <person name="Oliver S.G."/>
            <person name="Olsthoorn M."/>
            <person name="Pal K."/>
            <person name="van Peij N.N.M.E."/>
            <person name="Ram A.F.J."/>
            <person name="Rinas U."/>
            <person name="Roubos J.A."/>
            <person name="Sagt C.M.J."/>
            <person name="Schmoll M."/>
            <person name="Sun J."/>
            <person name="Ussery D."/>
            <person name="Varga J."/>
            <person name="Vervecken W."/>
            <person name="van de Vondervoort P.J.J."/>
            <person name="Wedler H."/>
            <person name="Woesten H.A.B."/>
            <person name="Zeng A.-P."/>
            <person name="van Ooyen A.J.J."/>
            <person name="Visser J."/>
            <person name="Stam H."/>
        </authorList>
    </citation>
    <scope>NUCLEOTIDE SEQUENCE [LARGE SCALE GENOMIC DNA]</scope>
    <source>
        <strain>ATCC MYA-4892 / CBS 513.88 / FGSC A1513</strain>
    </source>
</reference>